<dbReference type="EC" id="6.3.2.6" evidence="1"/>
<dbReference type="EMBL" id="AE014184">
    <property type="protein sequence ID" value="AAO44206.1"/>
    <property type="molecule type" value="Genomic_DNA"/>
</dbReference>
<dbReference type="RefSeq" id="WP_011102357.1">
    <property type="nucleotide sequence ID" value="NC_004572.3"/>
</dbReference>
<dbReference type="SMR" id="Q83GX1"/>
<dbReference type="STRING" id="203267.TWT_109"/>
<dbReference type="KEGG" id="twh:TWT_109"/>
<dbReference type="eggNOG" id="COG0152">
    <property type="taxonomic scope" value="Bacteria"/>
</dbReference>
<dbReference type="HOGENOM" id="CLU_045637_0_2_11"/>
<dbReference type="OrthoDB" id="9801549at2"/>
<dbReference type="UniPathway" id="UPA00074">
    <property type="reaction ID" value="UER00131"/>
</dbReference>
<dbReference type="Proteomes" id="UP000002200">
    <property type="component" value="Chromosome"/>
</dbReference>
<dbReference type="GO" id="GO:0005737">
    <property type="term" value="C:cytoplasm"/>
    <property type="evidence" value="ECO:0007669"/>
    <property type="project" value="TreeGrafter"/>
</dbReference>
<dbReference type="GO" id="GO:0005524">
    <property type="term" value="F:ATP binding"/>
    <property type="evidence" value="ECO:0007669"/>
    <property type="project" value="UniProtKB-KW"/>
</dbReference>
<dbReference type="GO" id="GO:0004639">
    <property type="term" value="F:phosphoribosylaminoimidazolesuccinocarboxamide synthase activity"/>
    <property type="evidence" value="ECO:0007669"/>
    <property type="project" value="UniProtKB-UniRule"/>
</dbReference>
<dbReference type="GO" id="GO:0006189">
    <property type="term" value="P:'de novo' IMP biosynthetic process"/>
    <property type="evidence" value="ECO:0007669"/>
    <property type="project" value="UniProtKB-UniRule"/>
</dbReference>
<dbReference type="CDD" id="cd01414">
    <property type="entry name" value="SAICAR_synt_Sc"/>
    <property type="match status" value="1"/>
</dbReference>
<dbReference type="Gene3D" id="3.30.470.20">
    <property type="entry name" value="ATP-grasp fold, B domain"/>
    <property type="match status" value="1"/>
</dbReference>
<dbReference type="Gene3D" id="3.30.200.20">
    <property type="entry name" value="Phosphorylase Kinase, domain 1"/>
    <property type="match status" value="1"/>
</dbReference>
<dbReference type="HAMAP" id="MF_00137">
    <property type="entry name" value="SAICAR_synth"/>
    <property type="match status" value="1"/>
</dbReference>
<dbReference type="InterPro" id="IPR028923">
    <property type="entry name" value="SAICAR_synt/ADE2_N"/>
</dbReference>
<dbReference type="InterPro" id="IPR018236">
    <property type="entry name" value="SAICAR_synthetase_CS"/>
</dbReference>
<dbReference type="NCBIfam" id="NF010568">
    <property type="entry name" value="PRK13961.1"/>
    <property type="match status" value="1"/>
</dbReference>
<dbReference type="PANTHER" id="PTHR43700">
    <property type="entry name" value="PHOSPHORIBOSYLAMINOIMIDAZOLE-SUCCINOCARBOXAMIDE SYNTHASE"/>
    <property type="match status" value="1"/>
</dbReference>
<dbReference type="PANTHER" id="PTHR43700:SF1">
    <property type="entry name" value="PHOSPHORIBOSYLAMINOIMIDAZOLE-SUCCINOCARBOXAMIDE SYNTHASE"/>
    <property type="match status" value="1"/>
</dbReference>
<dbReference type="Pfam" id="PF01259">
    <property type="entry name" value="SAICAR_synt"/>
    <property type="match status" value="1"/>
</dbReference>
<dbReference type="SUPFAM" id="SSF56104">
    <property type="entry name" value="SAICAR synthase-like"/>
    <property type="match status" value="1"/>
</dbReference>
<dbReference type="PROSITE" id="PS01057">
    <property type="entry name" value="SAICAR_SYNTHETASE_1"/>
    <property type="match status" value="1"/>
</dbReference>
<dbReference type="PROSITE" id="PS01058">
    <property type="entry name" value="SAICAR_SYNTHETASE_2"/>
    <property type="match status" value="1"/>
</dbReference>
<reference key="1">
    <citation type="journal article" date="2003" name="Genome Res.">
        <title>Tropheryma whipplei twist: a human pathogenic Actinobacteria with a reduced genome.</title>
        <authorList>
            <person name="Raoult D."/>
            <person name="Ogata H."/>
            <person name="Audic S."/>
            <person name="Robert C."/>
            <person name="Suhre K."/>
            <person name="Drancourt M."/>
            <person name="Claverie J.-M."/>
        </authorList>
    </citation>
    <scope>NUCLEOTIDE SEQUENCE [LARGE SCALE GENOMIC DNA]</scope>
    <source>
        <strain>Twist</strain>
    </source>
</reference>
<keyword id="KW-0067">ATP-binding</keyword>
<keyword id="KW-0436">Ligase</keyword>
<keyword id="KW-0547">Nucleotide-binding</keyword>
<keyword id="KW-0658">Purine biosynthesis</keyword>
<keyword id="KW-1185">Reference proteome</keyword>
<proteinExistence type="inferred from homology"/>
<feature type="chain" id="PRO_0000100894" description="Phosphoribosylaminoimidazole-succinocarboxamide synthase">
    <location>
        <begin position="1"/>
        <end position="305"/>
    </location>
</feature>
<accession>Q83GX1</accession>
<comment type="catalytic activity">
    <reaction evidence="1">
        <text>5-amino-1-(5-phospho-D-ribosyl)imidazole-4-carboxylate + L-aspartate + ATP = (2S)-2-[5-amino-1-(5-phospho-beta-D-ribosyl)imidazole-4-carboxamido]succinate + ADP + phosphate + 2 H(+)</text>
        <dbReference type="Rhea" id="RHEA:22628"/>
        <dbReference type="ChEBI" id="CHEBI:15378"/>
        <dbReference type="ChEBI" id="CHEBI:29991"/>
        <dbReference type="ChEBI" id="CHEBI:30616"/>
        <dbReference type="ChEBI" id="CHEBI:43474"/>
        <dbReference type="ChEBI" id="CHEBI:58443"/>
        <dbReference type="ChEBI" id="CHEBI:77657"/>
        <dbReference type="ChEBI" id="CHEBI:456216"/>
        <dbReference type="EC" id="6.3.2.6"/>
    </reaction>
</comment>
<comment type="pathway">
    <text evidence="1">Purine metabolism; IMP biosynthesis via de novo pathway; 5-amino-1-(5-phospho-D-ribosyl)imidazole-4-carboxamide from 5-amino-1-(5-phospho-D-ribosyl)imidazole-4-carboxylate: step 1/2.</text>
</comment>
<comment type="similarity">
    <text evidence="1">Belongs to the SAICAR synthetase family.</text>
</comment>
<protein>
    <recommendedName>
        <fullName evidence="1">Phosphoribosylaminoimidazole-succinocarboxamide synthase</fullName>
        <ecNumber evidence="1">6.3.2.6</ecNumber>
    </recommendedName>
    <alternativeName>
        <fullName evidence="1">SAICAR synthetase</fullName>
    </alternativeName>
</protein>
<evidence type="ECO:0000255" key="1">
    <source>
        <dbReference type="HAMAP-Rule" id="MF_00137"/>
    </source>
</evidence>
<sequence length="305" mass="35443">MTRKLEIPESRDLPDWSHIGGGKVRELYVHRQYKNILLMFASNRVSAFDFVLEPEIPEKGRMLTQMSNWWFRKLPAENHLLENYDQELYRDLASHIPSHILERSTICRKMDIIPFEFVIRGYLTGSAWADYLENNTVYGIKLKGKFRQGDRLPGPIFTPTTKSRTKDTPVRYEDLVNAIGLSHAQQLREMCTDYYTTAEQIARNKGLIIADAKFEFGIAEGKVYLADELLTADSARYWDINSWGQFDLPIERRLDSFDKQAVRDWVKCNSGKNITPQNITPLRLPQELIQTVYKKYKTLLAKLTG</sequence>
<gene>
    <name evidence="1" type="primary">purC</name>
    <name type="ordered locus">TWT_109</name>
</gene>
<name>PUR7_TROWT</name>
<organism>
    <name type="scientific">Tropheryma whipplei (strain Twist)</name>
    <name type="common">Whipple's bacillus</name>
    <dbReference type="NCBI Taxonomy" id="203267"/>
    <lineage>
        <taxon>Bacteria</taxon>
        <taxon>Bacillati</taxon>
        <taxon>Actinomycetota</taxon>
        <taxon>Actinomycetes</taxon>
        <taxon>Micrococcales</taxon>
        <taxon>Tropherymataceae</taxon>
        <taxon>Tropheryma</taxon>
    </lineage>
</organism>